<protein>
    <recommendedName>
        <fullName>Peptide-N(4)-(N-acetyl-beta-glucosaminyl)asparagine amidase</fullName>
        <shortName>PNGase</shortName>
        <ecNumber>3.5.1.52</ecNumber>
    </recommendedName>
    <alternativeName>
        <fullName>Peptide:N-glycanase 1</fullName>
    </alternativeName>
</protein>
<sequence>MTPPIKSPSSSSVDYGKLSEQLMIAYTKDVLQRNLQKFHGEQHRQQFKQLLNQPVIKSIHSLSGIIVRYRHNNSELDKALDTIDLPKIFERLEIREKTNKDKNLDYDDLLVLELLNYFKNDFFKWVNSPDCPSCGSNEDVQGLGAINPSSSKTISQSQAIIDQVSVIEVHECKKCKQKIEFPRINNPVTLLTTRRGRCGEWVNCFMLILQALIGGGDDDSDRIRYVWNQEDHVWCEYYSLSSKRWIHLDPCEGVYDEPLLYCNNWGKRMSYVIGFNYNYMIDLSDKYIVPEKQIPKNSIVNVQNVNFVISYSNGINQLKHFKRIEQQQQQQEVDVNEQRNLAFLKLYHNFLVPYNKEINQLKPELTKTTPSTDLPSGRQSGSTEWTKSRGENGES</sequence>
<dbReference type="EC" id="3.5.1.52"/>
<dbReference type="EMBL" id="CP017624">
    <property type="protein sequence ID" value="AOW27653.1"/>
    <property type="molecule type" value="Genomic_DNA"/>
</dbReference>
<dbReference type="RefSeq" id="XP_711833.1">
    <property type="nucleotide sequence ID" value="XM_706741.1"/>
</dbReference>
<dbReference type="SMR" id="Q59Q38"/>
<dbReference type="FunCoup" id="Q59Q38">
    <property type="interactions" value="104"/>
</dbReference>
<dbReference type="STRING" id="237561.Q59Q38"/>
<dbReference type="EnsemblFungi" id="C2_06490W_A-T">
    <property type="protein sequence ID" value="C2_06490W_A-T-p1"/>
    <property type="gene ID" value="C2_06490W_A"/>
</dbReference>
<dbReference type="GeneID" id="3646569"/>
<dbReference type="KEGG" id="cal:CAALFM_C206490WA"/>
<dbReference type="CGD" id="CAL0000182135">
    <property type="gene designation" value="orf19.7697"/>
</dbReference>
<dbReference type="VEuPathDB" id="FungiDB:C2_06490W_A"/>
<dbReference type="eggNOG" id="KOG0909">
    <property type="taxonomic scope" value="Eukaryota"/>
</dbReference>
<dbReference type="HOGENOM" id="CLU_031058_0_1_1"/>
<dbReference type="InParanoid" id="Q59Q38"/>
<dbReference type="OMA" id="AWDKPRL"/>
<dbReference type="OrthoDB" id="409136at2759"/>
<dbReference type="PRO" id="PR:Q59Q38"/>
<dbReference type="Proteomes" id="UP000000559">
    <property type="component" value="Chromosome 2"/>
</dbReference>
<dbReference type="GO" id="GO:0005737">
    <property type="term" value="C:cytoplasm"/>
    <property type="evidence" value="ECO:0007669"/>
    <property type="project" value="UniProtKB-SubCell"/>
</dbReference>
<dbReference type="GO" id="GO:0046872">
    <property type="term" value="F:metal ion binding"/>
    <property type="evidence" value="ECO:0007669"/>
    <property type="project" value="UniProtKB-KW"/>
</dbReference>
<dbReference type="GO" id="GO:0000224">
    <property type="term" value="F:peptide-N4-(N-acetyl-beta-glucosaminyl)asparagine amidase activity"/>
    <property type="evidence" value="ECO:0007669"/>
    <property type="project" value="UniProtKB-EC"/>
</dbReference>
<dbReference type="Gene3D" id="2.20.25.10">
    <property type="match status" value="1"/>
</dbReference>
<dbReference type="Gene3D" id="3.10.620.30">
    <property type="match status" value="1"/>
</dbReference>
<dbReference type="InterPro" id="IPR038765">
    <property type="entry name" value="Papain-like_cys_pep_sf"/>
</dbReference>
<dbReference type="InterPro" id="IPR050883">
    <property type="entry name" value="PNGase"/>
</dbReference>
<dbReference type="InterPro" id="IPR018325">
    <property type="entry name" value="Rad4/PNGase_transGLS-fold"/>
</dbReference>
<dbReference type="InterPro" id="IPR002931">
    <property type="entry name" value="Transglutaminase-like"/>
</dbReference>
<dbReference type="PANTHER" id="PTHR12143">
    <property type="entry name" value="PEPTIDE N-GLYCANASE PNGASE -RELATED"/>
    <property type="match status" value="1"/>
</dbReference>
<dbReference type="PANTHER" id="PTHR12143:SF19">
    <property type="entry name" value="PEPTIDE-N(4)-(N-ACETYL-BETA-GLUCOSAMINYL)ASPARAGINE AMIDASE"/>
    <property type="match status" value="1"/>
</dbReference>
<dbReference type="Pfam" id="PF03835">
    <property type="entry name" value="Rad4"/>
    <property type="match status" value="1"/>
</dbReference>
<dbReference type="SMART" id="SM00460">
    <property type="entry name" value="TGc"/>
    <property type="match status" value="1"/>
</dbReference>
<dbReference type="SUPFAM" id="SSF54001">
    <property type="entry name" value="Cysteine proteinases"/>
    <property type="match status" value="1"/>
</dbReference>
<gene>
    <name type="primary">PNG1</name>
    <name type="ordered locus">CAALFM_C206490WA</name>
    <name type="ORF">CaO19.26</name>
    <name type="ORF">CaO19.7697</name>
</gene>
<evidence type="ECO:0000250" key="1"/>
<evidence type="ECO:0000256" key="2">
    <source>
        <dbReference type="SAM" id="MobiDB-lite"/>
    </source>
</evidence>
<evidence type="ECO:0000305" key="3"/>
<keyword id="KW-0963">Cytoplasm</keyword>
<keyword id="KW-0378">Hydrolase</keyword>
<keyword id="KW-0479">Metal-binding</keyword>
<keyword id="KW-1185">Reference proteome</keyword>
<keyword id="KW-0862">Zinc</keyword>
<comment type="function">
    <text evidence="1">Specifically deglycosylates the denatured form of N-linked glycoproteins in the cytoplasm and assists their proteasome-mediated degradation. Cleaves the beta-aspartyl-glucosamine (GlcNAc) of the glycan and the amide side chain of Asn, converting Asn to Asp. Prefers proteins containing high-mannose over those bearing complex type oligosaccharides. Can recognize misfolded proteins in the endoplasmic reticulum that are exported to the cytosol to be destroyed and deglycosylate them, while it has no activity toward native proteins. Deglycosylation is a prerequisite for subsequent proteasome-mediated degradation of some, but not all, misfolded glycoproteins (By similarity).</text>
</comment>
<comment type="catalytic activity">
    <reaction>
        <text>Hydrolysis of an N(4)-(acetyl-beta-D-glucosaminyl)asparagine residue in which the glucosamine residue may be further glycosylated, to yield a (substituted) N-acetyl-beta-D-glucosaminylamine and a peptide containing an aspartate residue.</text>
        <dbReference type="EC" id="3.5.1.52"/>
    </reaction>
</comment>
<comment type="cofactor">
    <cofactor evidence="1">
        <name>Zn(2+)</name>
        <dbReference type="ChEBI" id="CHEBI:29105"/>
    </cofactor>
    <text evidence="1">Binds 1 zinc ion per subunit.</text>
</comment>
<comment type="subcellular location">
    <subcellularLocation>
        <location evidence="1">Cytoplasm</location>
    </subcellularLocation>
</comment>
<comment type="similarity">
    <text evidence="3">Belongs to the transglutaminase-like superfamily. PNGase family.</text>
</comment>
<proteinExistence type="inferred from homology"/>
<accession>Q59Q38</accession>
<accession>A0A1D8PHM9</accession>
<feature type="chain" id="PRO_0000248986" description="Peptide-N(4)-(N-acetyl-beta-glucosaminyl)asparagine amidase">
    <location>
        <begin position="1"/>
        <end position="395"/>
    </location>
</feature>
<feature type="region of interest" description="Disordered" evidence="2">
    <location>
        <begin position="363"/>
        <end position="395"/>
    </location>
</feature>
<feature type="compositionally biased region" description="Polar residues" evidence="2">
    <location>
        <begin position="366"/>
        <end position="385"/>
    </location>
</feature>
<feature type="compositionally biased region" description="Basic and acidic residues" evidence="2">
    <location>
        <begin position="386"/>
        <end position="395"/>
    </location>
</feature>
<feature type="active site" description="Nucleophile" evidence="1">
    <location>
        <position position="198"/>
    </location>
</feature>
<feature type="active site" evidence="1">
    <location>
        <position position="232"/>
    </location>
</feature>
<feature type="active site" evidence="1">
    <location>
        <position position="249"/>
    </location>
</feature>
<feature type="binding site" evidence="1">
    <location>
        <position position="131"/>
    </location>
    <ligand>
        <name>Zn(2+)</name>
        <dbReference type="ChEBI" id="CHEBI:29105"/>
    </ligand>
</feature>
<feature type="binding site" evidence="1">
    <location>
        <position position="134"/>
    </location>
    <ligand>
        <name>Zn(2+)</name>
        <dbReference type="ChEBI" id="CHEBI:29105"/>
    </ligand>
</feature>
<feature type="binding site" evidence="1">
    <location>
        <position position="172"/>
    </location>
    <ligand>
        <name>Zn(2+)</name>
        <dbReference type="ChEBI" id="CHEBI:29105"/>
    </ligand>
</feature>
<feature type="binding site" evidence="1">
    <location>
        <position position="175"/>
    </location>
    <ligand>
        <name>Zn(2+)</name>
        <dbReference type="ChEBI" id="CHEBI:29105"/>
    </ligand>
</feature>
<feature type="binding site" evidence="1">
    <location>
        <position position="252"/>
    </location>
    <ligand>
        <name>substrate</name>
    </ligand>
</feature>
<reference key="1">
    <citation type="journal article" date="2004" name="Proc. Natl. Acad. Sci. U.S.A.">
        <title>The diploid genome sequence of Candida albicans.</title>
        <authorList>
            <person name="Jones T."/>
            <person name="Federspiel N.A."/>
            <person name="Chibana H."/>
            <person name="Dungan J."/>
            <person name="Kalman S."/>
            <person name="Magee B.B."/>
            <person name="Newport G."/>
            <person name="Thorstenson Y.R."/>
            <person name="Agabian N."/>
            <person name="Magee P.T."/>
            <person name="Davis R.W."/>
            <person name="Scherer S."/>
        </authorList>
    </citation>
    <scope>NUCLEOTIDE SEQUENCE [LARGE SCALE GENOMIC DNA]</scope>
    <source>
        <strain>SC5314 / ATCC MYA-2876</strain>
    </source>
</reference>
<reference key="2">
    <citation type="journal article" date="2007" name="Genome Biol.">
        <title>Assembly of the Candida albicans genome into sixteen supercontigs aligned on the eight chromosomes.</title>
        <authorList>
            <person name="van het Hoog M."/>
            <person name="Rast T.J."/>
            <person name="Martchenko M."/>
            <person name="Grindle S."/>
            <person name="Dignard D."/>
            <person name="Hogues H."/>
            <person name="Cuomo C."/>
            <person name="Berriman M."/>
            <person name="Scherer S."/>
            <person name="Magee B.B."/>
            <person name="Whiteway M."/>
            <person name="Chibana H."/>
            <person name="Nantel A."/>
            <person name="Magee P.T."/>
        </authorList>
    </citation>
    <scope>GENOME REANNOTATION</scope>
    <source>
        <strain>SC5314 / ATCC MYA-2876</strain>
    </source>
</reference>
<reference key="3">
    <citation type="journal article" date="2013" name="Genome Biol.">
        <title>Assembly of a phased diploid Candida albicans genome facilitates allele-specific measurements and provides a simple model for repeat and indel structure.</title>
        <authorList>
            <person name="Muzzey D."/>
            <person name="Schwartz K."/>
            <person name="Weissman J.S."/>
            <person name="Sherlock G."/>
        </authorList>
    </citation>
    <scope>NUCLEOTIDE SEQUENCE [LARGE SCALE GENOMIC DNA]</scope>
    <scope>GENOME REANNOTATION</scope>
    <source>
        <strain>SC5314 / ATCC MYA-2876</strain>
    </source>
</reference>
<organism>
    <name type="scientific">Candida albicans (strain SC5314 / ATCC MYA-2876)</name>
    <name type="common">Yeast</name>
    <dbReference type="NCBI Taxonomy" id="237561"/>
    <lineage>
        <taxon>Eukaryota</taxon>
        <taxon>Fungi</taxon>
        <taxon>Dikarya</taxon>
        <taxon>Ascomycota</taxon>
        <taxon>Saccharomycotina</taxon>
        <taxon>Pichiomycetes</taxon>
        <taxon>Debaryomycetaceae</taxon>
        <taxon>Candida/Lodderomyces clade</taxon>
        <taxon>Candida</taxon>
    </lineage>
</organism>
<name>PNG1_CANAL</name>